<gene>
    <name type="primary">rsmH</name>
    <name type="synonym">mraW</name>
    <name type="synonym">yabC</name>
    <name type="ordered locus">b0082</name>
    <name type="ordered locus">JW0080</name>
</gene>
<feature type="chain" id="PRO_0000108620" description="Ribosomal RNA small subunit methyltransferase H">
    <location>
        <begin position="1"/>
        <end position="313"/>
    </location>
</feature>
<feature type="binding site" evidence="1">
    <location>
        <begin position="35"/>
        <end position="37"/>
    </location>
    <ligand>
        <name>S-adenosyl-L-methionine</name>
        <dbReference type="ChEBI" id="CHEBI:59789"/>
    </ligand>
</feature>
<feature type="binding site" evidence="1">
    <location>
        <position position="55"/>
    </location>
    <ligand>
        <name>S-adenosyl-L-methionine</name>
        <dbReference type="ChEBI" id="CHEBI:59789"/>
    </ligand>
</feature>
<feature type="binding site" evidence="1">
    <location>
        <position position="79"/>
    </location>
    <ligand>
        <name>S-adenosyl-L-methionine</name>
        <dbReference type="ChEBI" id="CHEBI:59789"/>
    </ligand>
</feature>
<feature type="binding site" evidence="1">
    <location>
        <position position="101"/>
    </location>
    <ligand>
        <name>S-adenosyl-L-methionine</name>
        <dbReference type="ChEBI" id="CHEBI:59789"/>
    </ligand>
</feature>
<feature type="binding site" evidence="1">
    <location>
        <position position="108"/>
    </location>
    <ligand>
        <name>S-adenosyl-L-methionine</name>
        <dbReference type="ChEBI" id="CHEBI:59789"/>
    </ligand>
</feature>
<feature type="turn" evidence="5">
    <location>
        <begin position="10"/>
        <end position="12"/>
    </location>
</feature>
<feature type="helix" evidence="5">
    <location>
        <begin position="13"/>
        <end position="18"/>
    </location>
</feature>
<feature type="strand" evidence="5">
    <location>
        <begin position="26"/>
        <end position="30"/>
    </location>
</feature>
<feature type="helix" evidence="5">
    <location>
        <begin position="36"/>
        <end position="42"/>
    </location>
</feature>
<feature type="strand" evidence="5">
    <location>
        <begin position="50"/>
        <end position="56"/>
    </location>
</feature>
<feature type="helix" evidence="5">
    <location>
        <begin position="58"/>
        <end position="64"/>
    </location>
</feature>
<feature type="strand" evidence="5">
    <location>
        <begin position="72"/>
        <end position="77"/>
    </location>
</feature>
<feature type="helix" evidence="5">
    <location>
        <begin position="79"/>
        <end position="81"/>
    </location>
</feature>
<feature type="helix" evidence="5">
    <location>
        <begin position="82"/>
        <end position="88"/>
    </location>
</feature>
<feature type="strand" evidence="5">
    <location>
        <begin position="95"/>
        <end position="101"/>
    </location>
</feature>
<feature type="helix" evidence="5">
    <location>
        <begin position="106"/>
        <end position="110"/>
    </location>
</feature>
<feature type="helix" evidence="5">
    <location>
        <begin position="112"/>
        <end position="114"/>
    </location>
</feature>
<feature type="strand" evidence="5">
    <location>
        <begin position="118"/>
        <end position="120"/>
    </location>
</feature>
<feature type="helix" evidence="5">
    <location>
        <begin position="136"/>
        <end position="142"/>
    </location>
</feature>
<feature type="helix" evidence="5">
    <location>
        <begin position="145"/>
        <end position="156"/>
    </location>
</feature>
<feature type="helix" evidence="5">
    <location>
        <begin position="161"/>
        <end position="174"/>
    </location>
</feature>
<feature type="helix" evidence="5">
    <location>
        <begin position="180"/>
        <end position="190"/>
    </location>
</feature>
<feature type="helix" evidence="5">
    <location>
        <begin position="202"/>
        <end position="213"/>
    </location>
</feature>
<feature type="helix" evidence="5">
    <location>
        <begin position="215"/>
        <end position="229"/>
    </location>
</feature>
<feature type="strand" evidence="5">
    <location>
        <begin position="230"/>
        <end position="242"/>
    </location>
</feature>
<feature type="helix" evidence="5">
    <location>
        <begin position="243"/>
        <end position="255"/>
    </location>
</feature>
<feature type="strand" evidence="5">
    <location>
        <begin position="281"/>
        <end position="287"/>
    </location>
</feature>
<feature type="helix" evidence="5">
    <location>
        <begin position="291"/>
        <end position="296"/>
    </location>
</feature>
<feature type="helix" evidence="5">
    <location>
        <begin position="298"/>
        <end position="300"/>
    </location>
</feature>
<feature type="strand" evidence="5">
    <location>
        <begin position="304"/>
        <end position="310"/>
    </location>
</feature>
<protein>
    <recommendedName>
        <fullName>Ribosomal RNA small subunit methyltransferase H</fullName>
        <ecNumber>2.1.1.199</ecNumber>
    </recommendedName>
    <alternativeName>
        <fullName>16S rRNA m(4)C1402 methyltransferase</fullName>
    </alternativeName>
    <alternativeName>
        <fullName>rRNA (cytosine-N(4)-)-methyltransferase RsmH</fullName>
    </alternativeName>
</protein>
<organism>
    <name type="scientific">Escherichia coli (strain K12)</name>
    <dbReference type="NCBI Taxonomy" id="83333"/>
    <lineage>
        <taxon>Bacteria</taxon>
        <taxon>Pseudomonadati</taxon>
        <taxon>Pseudomonadota</taxon>
        <taxon>Gammaproteobacteria</taxon>
        <taxon>Enterobacterales</taxon>
        <taxon>Enterobacteriaceae</taxon>
        <taxon>Escherichia</taxon>
    </lineage>
</organism>
<keyword id="KW-0002">3D-structure</keyword>
<keyword id="KW-0963">Cytoplasm</keyword>
<keyword id="KW-0903">Direct protein sequencing</keyword>
<keyword id="KW-0489">Methyltransferase</keyword>
<keyword id="KW-1185">Reference proteome</keyword>
<keyword id="KW-0698">rRNA processing</keyword>
<keyword id="KW-0949">S-adenosyl-L-methionine</keyword>
<keyword id="KW-0808">Transferase</keyword>
<name>RSMH_ECOLI</name>
<accession>P60390</accession>
<accession>P18595</accession>
<reference key="1">
    <citation type="journal article" date="1990" name="Nucleic Acids Res.">
        <title>Nucleotide sequence of the regulatory region of the gene pbpB of Escherichia coli.</title>
        <authorList>
            <person name="Gomez M.J."/>
            <person name="Fluoret B."/>
            <person name="van Heijenoort J."/>
            <person name="Ayala J.A."/>
        </authorList>
    </citation>
    <scope>NUCLEOTIDE SEQUENCE [GENOMIC DNA]</scope>
    <source>
        <strain>K12</strain>
    </source>
</reference>
<reference key="2">
    <citation type="journal article" date="1992" name="Nucleic Acids Res.">
        <title>Systematic sequencing of the Escherichia coli genome: analysis of the 0-2.4 min region.</title>
        <authorList>
            <person name="Yura T."/>
            <person name="Mori H."/>
            <person name="Nagai H."/>
            <person name="Nagata T."/>
            <person name="Ishihama A."/>
            <person name="Fujita N."/>
            <person name="Isono K."/>
            <person name="Mizobuchi K."/>
            <person name="Nakata A."/>
        </authorList>
    </citation>
    <scope>NUCLEOTIDE SEQUENCE [LARGE SCALE GENOMIC DNA]</scope>
    <source>
        <strain>K12</strain>
    </source>
</reference>
<reference key="3">
    <citation type="journal article" date="1997" name="Science">
        <title>The complete genome sequence of Escherichia coli K-12.</title>
        <authorList>
            <person name="Blattner F.R."/>
            <person name="Plunkett G. III"/>
            <person name="Bloch C.A."/>
            <person name="Perna N.T."/>
            <person name="Burland V."/>
            <person name="Riley M."/>
            <person name="Collado-Vides J."/>
            <person name="Glasner J.D."/>
            <person name="Rode C.K."/>
            <person name="Mayhew G.F."/>
            <person name="Gregor J."/>
            <person name="Davis N.W."/>
            <person name="Kirkpatrick H.A."/>
            <person name="Goeden M.A."/>
            <person name="Rose D.J."/>
            <person name="Mau B."/>
            <person name="Shao Y."/>
        </authorList>
    </citation>
    <scope>NUCLEOTIDE SEQUENCE [LARGE SCALE GENOMIC DNA]</scope>
    <source>
        <strain>K12 / MG1655 / ATCC 47076</strain>
    </source>
</reference>
<reference key="4">
    <citation type="journal article" date="2006" name="Mol. Syst. Biol.">
        <title>Highly accurate genome sequences of Escherichia coli K-12 strains MG1655 and W3110.</title>
        <authorList>
            <person name="Hayashi K."/>
            <person name="Morooka N."/>
            <person name="Yamamoto Y."/>
            <person name="Fujita K."/>
            <person name="Isono K."/>
            <person name="Choi S."/>
            <person name="Ohtsubo E."/>
            <person name="Baba T."/>
            <person name="Wanner B.L."/>
            <person name="Mori H."/>
            <person name="Horiuchi T."/>
        </authorList>
    </citation>
    <scope>NUCLEOTIDE SEQUENCE [LARGE SCALE GENOMIC DNA]</scope>
    <source>
        <strain>K12 / W3110 / ATCC 27325 / DSM 5911</strain>
    </source>
</reference>
<reference key="5">
    <citation type="journal article" date="1983" name="Mol. Gen. Genet.">
        <title>On the process of cellular division in Escherichia coli: nucleotide sequence of the gene for penicillin-binding protein 3.</title>
        <authorList>
            <person name="Nakamura M."/>
            <person name="Maruyama I.N."/>
            <person name="Soma M."/>
            <person name="Kato J."/>
            <person name="Suzuki H."/>
            <person name="Horota Y."/>
        </authorList>
    </citation>
    <scope>NUCLEOTIDE SEQUENCE [GENOMIC DNA] OF 232-313</scope>
    <source>
        <strain>K12</strain>
    </source>
</reference>
<reference key="6">
    <citation type="journal article" date="1999" name="Biochimie">
        <title>mraW, an essential gene at the dcw cluster of Escherichia coli codes for a cytoplasmic protein with methyltransferase activity.</title>
        <authorList>
            <person name="Carrion M."/>
            <person name="Gomez M.J."/>
            <person name="Merchante-Schubert R."/>
            <person name="Dongarra S."/>
            <person name="Ayala J.A."/>
        </authorList>
    </citation>
    <scope>PROTEIN SEQUENCE OF 1-16</scope>
    <scope>FUNCTION</scope>
    <scope>SUBCELLULAR LOCATION</scope>
    <source>
        <strain>K12 / W3110 / ATCC 27325 / DSM 5911</strain>
    </source>
</reference>
<reference key="7">
    <citation type="journal article" date="1999" name="Electrophoresis">
        <title>Enrichment of low abundance proteins of Escherichia coli by hydroxyapatite chromatography.</title>
        <authorList>
            <person name="Fountoulakis M."/>
            <person name="Takacs M.-F."/>
            <person name="Berndt P."/>
            <person name="Langen H."/>
            <person name="Takacs B."/>
        </authorList>
    </citation>
    <scope>IDENTIFICATION BY MASS SPECTROMETRY</scope>
    <source>
        <strain>B / BL21</strain>
    </source>
</reference>
<reference key="8">
    <citation type="journal article" date="2010" name="Nucleic Acids Res.">
        <title>Fine-tuning of the ribosomal decoding center by conserved methyl-modifications in the Escherichia coli 16S rRNA.</title>
        <authorList>
            <person name="Kimura S."/>
            <person name="Suzuki T."/>
        </authorList>
    </citation>
    <scope>FUNCTION</scope>
    <scope>CATALYTIC ACTIVITY</scope>
    <source>
        <strain>K12</strain>
    </source>
</reference>
<sequence>MMENYKHTTVLLDEAVNGLNIRPDGIYIDGTFGRGGHSRLILSQLGEEGRLLAIDRDPQAIAVAKTIDDPRFSIIHGPFSALGEYVAERDLIGKIDGILLDLGVSSPQLDDAERGFSFMRDGPLDMRMDPTRGQSAAEWLQTAEEADIAWVLKTYGEERFAKRIARAIVERNREQPMTRTKELAEVVAAATPVKDKFKHPATRTFQAVRIWVNSELEEIEQALKSSLNVLAPGGRLSIISFHSLEDRIVKRFMRENSRGPQVPAGLPMTEEQLKKLGGRQLRALGKLMPGEEEVAENPRARSSVLRIAERTNA</sequence>
<dbReference type="EC" id="2.1.1.199"/>
<dbReference type="EMBL" id="X52063">
    <property type="protein sequence ID" value="CAA36283.1"/>
    <property type="molecule type" value="Genomic_DNA"/>
</dbReference>
<dbReference type="EMBL" id="X55034">
    <property type="protein sequence ID" value="CAA38859.1"/>
    <property type="molecule type" value="Genomic_DNA"/>
</dbReference>
<dbReference type="EMBL" id="U00096">
    <property type="protein sequence ID" value="AAC73193.1"/>
    <property type="molecule type" value="Genomic_DNA"/>
</dbReference>
<dbReference type="EMBL" id="AP009048">
    <property type="protein sequence ID" value="BAB96650.1"/>
    <property type="molecule type" value="Genomic_DNA"/>
</dbReference>
<dbReference type="EMBL" id="K00137">
    <property type="status" value="NOT_ANNOTATED_CDS"/>
    <property type="molecule type" value="Genomic_DNA"/>
</dbReference>
<dbReference type="PIR" id="JH0092">
    <property type="entry name" value="QQECFT"/>
</dbReference>
<dbReference type="RefSeq" id="NP_414624.1">
    <property type="nucleotide sequence ID" value="NC_000913.3"/>
</dbReference>
<dbReference type="RefSeq" id="WP_000970479.1">
    <property type="nucleotide sequence ID" value="NZ_STEB01000010.1"/>
</dbReference>
<dbReference type="PDB" id="3TKA">
    <property type="method" value="X-ray"/>
    <property type="resolution" value="2.25 A"/>
    <property type="chains" value="A=1-313"/>
</dbReference>
<dbReference type="PDBsum" id="3TKA"/>
<dbReference type="SMR" id="P60390"/>
<dbReference type="BioGRID" id="4261639">
    <property type="interactions" value="49"/>
</dbReference>
<dbReference type="BioGRID" id="849207">
    <property type="interactions" value="1"/>
</dbReference>
<dbReference type="DIP" id="DIP-35840N"/>
<dbReference type="FunCoup" id="P60390">
    <property type="interactions" value="779"/>
</dbReference>
<dbReference type="IntAct" id="P60390">
    <property type="interactions" value="7"/>
</dbReference>
<dbReference type="STRING" id="511145.b0082"/>
<dbReference type="jPOST" id="P60390"/>
<dbReference type="PaxDb" id="511145-b0082"/>
<dbReference type="EnsemblBacteria" id="AAC73193">
    <property type="protein sequence ID" value="AAC73193"/>
    <property type="gene ID" value="b0082"/>
</dbReference>
<dbReference type="GeneID" id="86862592"/>
<dbReference type="GeneID" id="944806"/>
<dbReference type="KEGG" id="ecj:JW0080"/>
<dbReference type="KEGG" id="eco:b0082"/>
<dbReference type="KEGG" id="ecoc:C3026_00315"/>
<dbReference type="PATRIC" id="fig|1411691.4.peg.2198"/>
<dbReference type="EchoBASE" id="EB1077"/>
<dbReference type="eggNOG" id="COG0275">
    <property type="taxonomic scope" value="Bacteria"/>
</dbReference>
<dbReference type="HOGENOM" id="CLU_038422_2_0_6"/>
<dbReference type="InParanoid" id="P60390"/>
<dbReference type="OMA" id="NPAKRTF"/>
<dbReference type="OrthoDB" id="9806637at2"/>
<dbReference type="PhylomeDB" id="P60390"/>
<dbReference type="BioCyc" id="EcoCyc:EG11085-MONOMER"/>
<dbReference type="BioCyc" id="MetaCyc:EG11085-MONOMER"/>
<dbReference type="BRENDA" id="2.1.1.199">
    <property type="organism ID" value="2026"/>
</dbReference>
<dbReference type="EvolutionaryTrace" id="P60390"/>
<dbReference type="PRO" id="PR:P60390"/>
<dbReference type="Proteomes" id="UP000000625">
    <property type="component" value="Chromosome"/>
</dbReference>
<dbReference type="GO" id="GO:0005737">
    <property type="term" value="C:cytoplasm"/>
    <property type="evidence" value="ECO:0000314"/>
    <property type="project" value="EcoCyc"/>
</dbReference>
<dbReference type="GO" id="GO:0005829">
    <property type="term" value="C:cytosol"/>
    <property type="evidence" value="ECO:0000314"/>
    <property type="project" value="EcoCyc"/>
</dbReference>
<dbReference type="GO" id="GO:0042803">
    <property type="term" value="F:protein homodimerization activity"/>
    <property type="evidence" value="ECO:0000314"/>
    <property type="project" value="EcoCyc"/>
</dbReference>
<dbReference type="GO" id="GO:0071424">
    <property type="term" value="F:rRNA (cytosine-N4-)-methyltransferase activity"/>
    <property type="evidence" value="ECO:0000314"/>
    <property type="project" value="EcoCyc"/>
</dbReference>
<dbReference type="GO" id="GO:0070475">
    <property type="term" value="P:rRNA base methylation"/>
    <property type="evidence" value="ECO:0000315"/>
    <property type="project" value="EcoCyc"/>
</dbReference>
<dbReference type="FunFam" id="1.10.150.170:FF:000001">
    <property type="entry name" value="Ribosomal RNA small subunit methyltransferase H"/>
    <property type="match status" value="1"/>
</dbReference>
<dbReference type="Gene3D" id="1.10.150.170">
    <property type="entry name" value="Putative methyltransferase TM0872, insert domain"/>
    <property type="match status" value="1"/>
</dbReference>
<dbReference type="Gene3D" id="3.40.50.150">
    <property type="entry name" value="Vaccinia Virus protein VP39"/>
    <property type="match status" value="1"/>
</dbReference>
<dbReference type="HAMAP" id="MF_01007">
    <property type="entry name" value="16SrRNA_methyltr_H"/>
    <property type="match status" value="1"/>
</dbReference>
<dbReference type="InterPro" id="IPR002903">
    <property type="entry name" value="RsmH"/>
</dbReference>
<dbReference type="InterPro" id="IPR023397">
    <property type="entry name" value="SAM-dep_MeTrfase_MraW_recog"/>
</dbReference>
<dbReference type="InterPro" id="IPR029063">
    <property type="entry name" value="SAM-dependent_MTases_sf"/>
</dbReference>
<dbReference type="NCBIfam" id="TIGR00006">
    <property type="entry name" value="16S rRNA (cytosine(1402)-N(4))-methyltransferase RsmH"/>
    <property type="match status" value="1"/>
</dbReference>
<dbReference type="PANTHER" id="PTHR11265:SF0">
    <property type="entry name" value="12S RRNA N4-METHYLCYTIDINE METHYLTRANSFERASE"/>
    <property type="match status" value="1"/>
</dbReference>
<dbReference type="PANTHER" id="PTHR11265">
    <property type="entry name" value="S-ADENOSYL-METHYLTRANSFERASE MRAW"/>
    <property type="match status" value="1"/>
</dbReference>
<dbReference type="Pfam" id="PF01795">
    <property type="entry name" value="Methyltransf_5"/>
    <property type="match status" value="1"/>
</dbReference>
<dbReference type="PIRSF" id="PIRSF004486">
    <property type="entry name" value="MraW"/>
    <property type="match status" value="1"/>
</dbReference>
<dbReference type="SUPFAM" id="SSF81799">
    <property type="entry name" value="Putative methyltransferase TM0872, insert domain"/>
    <property type="match status" value="1"/>
</dbReference>
<dbReference type="SUPFAM" id="SSF53335">
    <property type="entry name" value="S-adenosyl-L-methionine-dependent methyltransferases"/>
    <property type="match status" value="1"/>
</dbReference>
<comment type="function">
    <text evidence="2 3">Specifically methylates the N4 position of cytidine in position 1402 (C1402) of 16S rRNA. In vitro, active on the assembled 30S subunit, but not naked 16S rRNA or 70S ribosomes.</text>
</comment>
<comment type="catalytic activity">
    <reaction evidence="3">
        <text>cytidine(1402) in 16S rRNA + S-adenosyl-L-methionine = N(4)-methylcytidine(1402) in 16S rRNA + S-adenosyl-L-homocysteine + H(+)</text>
        <dbReference type="Rhea" id="RHEA:42928"/>
        <dbReference type="Rhea" id="RHEA-COMP:10286"/>
        <dbReference type="Rhea" id="RHEA-COMP:10287"/>
        <dbReference type="ChEBI" id="CHEBI:15378"/>
        <dbReference type="ChEBI" id="CHEBI:57856"/>
        <dbReference type="ChEBI" id="CHEBI:59789"/>
        <dbReference type="ChEBI" id="CHEBI:74506"/>
        <dbReference type="ChEBI" id="CHEBI:82748"/>
        <dbReference type="EC" id="2.1.1.199"/>
    </reaction>
</comment>
<comment type="subcellular location">
    <subcellularLocation>
        <location evidence="2">Cytoplasm</location>
    </subcellularLocation>
</comment>
<comment type="similarity">
    <text evidence="4">Belongs to the methyltransferase superfamily. RsmH family.</text>
</comment>
<evidence type="ECO:0000250" key="1"/>
<evidence type="ECO:0000269" key="2">
    <source>
    </source>
</evidence>
<evidence type="ECO:0000269" key="3">
    <source>
    </source>
</evidence>
<evidence type="ECO:0000305" key="4"/>
<evidence type="ECO:0007829" key="5">
    <source>
        <dbReference type="PDB" id="3TKA"/>
    </source>
</evidence>
<proteinExistence type="evidence at protein level"/>